<reference key="1">
    <citation type="journal article" date="1996" name="Virus Res.">
        <title>The complete nucleotide sequence of RNA-2 of a fungally-transmitted UK isolate of barley mild mosaic bymovirus and identification of amino acid combinations possibly involved in fungus transmission.</title>
        <authorList>
            <person name="Peerenboom E."/>
            <person name="Jacobi V."/>
            <person name="Antoniw J.F."/>
            <person name="Schlichter U."/>
            <person name="Cartwright E.J."/>
            <person name="Steinbiss H.H."/>
            <person name="Adams M.J."/>
        </authorList>
    </citation>
    <scope>NUCLEOTIDE SEQUENCE [GENOMIC RNA]</scope>
</reference>
<keyword id="KW-0378">Hydrolase</keyword>
<keyword id="KW-0645">Protease</keyword>
<keyword id="KW-0788">Thiol protease</keyword>
<protein>
    <recommendedName>
        <fullName>Genome polyprotein 2</fullName>
    </recommendedName>
    <component>
        <recommendedName>
            <fullName>Helper component proteinase</fullName>
            <shortName>HC-pro</shortName>
            <ecNumber>3.4.22.45</ecNumber>
        </recommendedName>
    </component>
    <component>
        <recommendedName>
            <fullName>70 kDa protein</fullName>
        </recommendedName>
    </component>
</protein>
<evidence type="ECO:0000255" key="1"/>
<evidence type="ECO:0000255" key="2">
    <source>
        <dbReference type="PROSITE-ProRule" id="PRU01080"/>
    </source>
</evidence>
<evidence type="ECO:0000256" key="3">
    <source>
        <dbReference type="SAM" id="MobiDB-lite"/>
    </source>
</evidence>
<evidence type="ECO:0000305" key="4"/>
<proteinExistence type="inferred from homology"/>
<comment type="catalytic activity">
    <reaction>
        <text>Hydrolyzes a Gly-|-Gly bond at its own C-terminus, commonly in the sequence -Tyr-Xaa-Val-Gly-|-Gly, in the processing of the potyviral polyprotein.</text>
        <dbReference type="EC" id="3.4.22.45"/>
    </reaction>
</comment>
<comment type="PTM">
    <text evidence="4">The viral RNA2 of bymoviruses is expressed as a single polyprotein which undergoes post-translational proteolytic processing resulting in the production of at least two individual proteins. The HC-pro cleaves its C-terminus autocatalytically (Potential).</text>
</comment>
<comment type="similarity">
    <text evidence="4">Belongs to the bymoviruses polyprotein 2 family.</text>
</comment>
<organismHost>
    <name type="scientific">Hordeum vulgare</name>
    <name type="common">Barley</name>
    <dbReference type="NCBI Taxonomy" id="4513"/>
</organismHost>
<name>POL2_BAMMU</name>
<sequence length="894" mass="98349">MMMNSTIRQGWQQVLRRFSIPASGDRLIVSNSTDQPIGLFGAFDTSLQTLSQVTNDPEILKQKSNIPTHLDIASVLETSPRSFPWVFLTNSFCTFGGSIHAQNLQAFATAEFKSGFCYMNLLIPLSFDIIDAHADSFRGFVEQLPDTLGAYPSLSMVLNVMLHAATRFPEIVASPVPTIAFDAESLQFHVTDKRGVPGMWNILKACRVYELLSLAADGIGCEYMLYPVGAAPQYSFWKKSMDHFISDRFVEFLAMQGLLASALEQDYKTHDARDALLTALQNAGYTNVVARERRFPNGHDPSTVWLNLNEAPISEKLTELKRYLLVGHRSDEIADITHNVHQHVFEVLKTMSVQFSKTTNAYNRARFEVNHEVIWNAEYGRSSQQNAELEALVLFLNRQSLEIENILRRTTSPVVVTNWQPDVPPAAPEISEGEPTHAVATPITEAPTHATPVEVVNLPPTRSYWAETLVGVLTAILGTIFALLTRALIRPKRLRRKSTFPWVSLDSGDEDDDHSGGGGGSPQTPGGQPPASPAPGTHQSRFSVQDIASDTSLLSVDLDEDTLSQYDETFQTIRRALFENSFGDILQNSARWISTLEAMALADGNAPYTLLAQYLNGIEEAYTNFRNTGHISRATLSGFFVLEDSLRAAGIAFGGTTPTQTIQNQSADSPARRWKTRFEQIACELGDASIKSLADLADIIDTERERGDLTQFDVLAASSISSLCRAVRIISDTTDPNTQLALVENATAMQNNINAILGTNVSIPFLSATRRLLITRRIQEAGAESRSGATPDTIQQLADAELAEIVSEANMFNEMAASQRDIANATREATIREHVLSPVNALANVGMAAAFFRSGGLRSRAFHPTMPTMPGSPAAIGRPMFQAFRGRGHRLNRR</sequence>
<feature type="chain" id="PRO_0000040562" description="Helper component proteinase" evidence="1">
    <location>
        <begin position="1"/>
        <end position="229"/>
    </location>
</feature>
<feature type="chain" id="PRO_0000040563" description="70 kDa protein">
    <location>
        <begin position="230"/>
        <end position="894"/>
    </location>
</feature>
<feature type="domain" description="Peptidase C6" evidence="2">
    <location>
        <begin position="109"/>
        <end position="229"/>
    </location>
</feature>
<feature type="region of interest" description="Disordered" evidence="3">
    <location>
        <begin position="502"/>
        <end position="539"/>
    </location>
</feature>
<feature type="active site" description="For helper component proteinase activity" evidence="2">
    <location>
        <position position="117"/>
    </location>
</feature>
<feature type="active site" description="For helper component proteinase activity" evidence="2">
    <location>
        <position position="189"/>
    </location>
</feature>
<feature type="site" description="Cleavage; by autolysis" evidence="2">
    <location>
        <begin position="229"/>
        <end position="230"/>
    </location>
</feature>
<accession>Q65657</accession>
<organism>
    <name type="scientific">Barley mild mosaic virus (strain UK-F)</name>
    <name type="common">BaMMV</name>
    <dbReference type="NCBI Taxonomy" id="103901"/>
    <lineage>
        <taxon>Viruses</taxon>
        <taxon>Riboviria</taxon>
        <taxon>Orthornavirae</taxon>
        <taxon>Pisuviricota</taxon>
        <taxon>Stelpaviricetes</taxon>
        <taxon>Patatavirales</taxon>
        <taxon>Potyviridae</taxon>
        <taxon>Bymovirus</taxon>
        <taxon>Barley mild mosaic virus</taxon>
    </lineage>
</organism>
<dbReference type="EC" id="3.4.22.45"/>
<dbReference type="EMBL" id="X90904">
    <property type="protein sequence ID" value="CAA62412.1"/>
    <property type="molecule type" value="Genomic_RNA"/>
</dbReference>
<dbReference type="RefSeq" id="NP_604490.1">
    <property type="nucleotide sequence ID" value="NC_003482.1"/>
</dbReference>
<dbReference type="SMR" id="Q65657"/>
<dbReference type="MEROPS" id="C06.002"/>
<dbReference type="GeneID" id="963864"/>
<dbReference type="KEGG" id="vg:963864"/>
<dbReference type="Proteomes" id="UP000202775">
    <property type="component" value="Genome"/>
</dbReference>
<dbReference type="GO" id="GO:0004197">
    <property type="term" value="F:cysteine-type endopeptidase activity"/>
    <property type="evidence" value="ECO:0007669"/>
    <property type="project" value="InterPro"/>
</dbReference>
<dbReference type="GO" id="GO:0005198">
    <property type="term" value="F:structural molecule activity"/>
    <property type="evidence" value="ECO:0007669"/>
    <property type="project" value="InterPro"/>
</dbReference>
<dbReference type="GO" id="GO:0006508">
    <property type="term" value="P:proteolysis"/>
    <property type="evidence" value="ECO:0007669"/>
    <property type="project" value="UniProtKB-KW"/>
</dbReference>
<dbReference type="Gene3D" id="3.90.70.150">
    <property type="entry name" value="Helper component proteinase"/>
    <property type="match status" value="1"/>
</dbReference>
<dbReference type="Gene3D" id="1.20.120.70">
    <property type="entry name" value="Tobacco mosaic virus-like, coat protein"/>
    <property type="match status" value="1"/>
</dbReference>
<dbReference type="InterPro" id="IPR001456">
    <property type="entry name" value="HC-pro"/>
</dbReference>
<dbReference type="InterPro" id="IPR031159">
    <property type="entry name" value="HC_PRO_CPD_dom"/>
</dbReference>
<dbReference type="InterPro" id="IPR042308">
    <property type="entry name" value="HC_PRO_CPD_sf"/>
</dbReference>
<dbReference type="InterPro" id="IPR001337">
    <property type="entry name" value="TMV-like_coat"/>
</dbReference>
<dbReference type="InterPro" id="IPR036417">
    <property type="entry name" value="TMV-like_coat_sf"/>
</dbReference>
<dbReference type="Pfam" id="PF00851">
    <property type="entry name" value="Peptidase_C6"/>
    <property type="match status" value="1"/>
</dbReference>
<dbReference type="Pfam" id="PF00721">
    <property type="entry name" value="TMV_coat"/>
    <property type="match status" value="1"/>
</dbReference>
<dbReference type="SUPFAM" id="SSF47195">
    <property type="entry name" value="TMV-like viral coat proteins"/>
    <property type="match status" value="1"/>
</dbReference>
<dbReference type="PROSITE" id="PS51744">
    <property type="entry name" value="HC_PRO_CPD"/>
    <property type="match status" value="1"/>
</dbReference>
<gene>
    <name type="primary">RNA2</name>
</gene>